<keyword id="KW-0488">Methylation</keyword>
<keyword id="KW-0687">Ribonucleoprotein</keyword>
<keyword id="KW-0689">Ribosomal protein</keyword>
<keyword id="KW-0694">RNA-binding</keyword>
<keyword id="KW-0699">rRNA-binding</keyword>
<keyword id="KW-0820">tRNA-binding</keyword>
<protein>
    <recommendedName>
        <fullName evidence="2">Small ribosomal subunit protein uS12</fullName>
    </recommendedName>
    <alternativeName>
        <fullName evidence="4">30S ribosomal protein S12</fullName>
    </alternativeName>
</protein>
<dbReference type="EMBL" id="CP000053">
    <property type="protein sequence ID" value="AAY62006.1"/>
    <property type="status" value="ALT_INIT"/>
    <property type="molecule type" value="Genomic_DNA"/>
</dbReference>
<dbReference type="SMR" id="Q4UKC5"/>
<dbReference type="STRING" id="315456.RF_1155"/>
<dbReference type="KEGG" id="rfe:RF_1155"/>
<dbReference type="eggNOG" id="COG0048">
    <property type="taxonomic scope" value="Bacteria"/>
</dbReference>
<dbReference type="HOGENOM" id="CLU_104295_1_2_5"/>
<dbReference type="OrthoDB" id="9802366at2"/>
<dbReference type="Proteomes" id="UP000008548">
    <property type="component" value="Chromosome"/>
</dbReference>
<dbReference type="GO" id="GO:0015935">
    <property type="term" value="C:small ribosomal subunit"/>
    <property type="evidence" value="ECO:0007669"/>
    <property type="project" value="InterPro"/>
</dbReference>
<dbReference type="GO" id="GO:0019843">
    <property type="term" value="F:rRNA binding"/>
    <property type="evidence" value="ECO:0007669"/>
    <property type="project" value="UniProtKB-UniRule"/>
</dbReference>
<dbReference type="GO" id="GO:0003735">
    <property type="term" value="F:structural constituent of ribosome"/>
    <property type="evidence" value="ECO:0007669"/>
    <property type="project" value="InterPro"/>
</dbReference>
<dbReference type="GO" id="GO:0000049">
    <property type="term" value="F:tRNA binding"/>
    <property type="evidence" value="ECO:0007669"/>
    <property type="project" value="UniProtKB-UniRule"/>
</dbReference>
<dbReference type="GO" id="GO:0006412">
    <property type="term" value="P:translation"/>
    <property type="evidence" value="ECO:0007669"/>
    <property type="project" value="UniProtKB-UniRule"/>
</dbReference>
<dbReference type="CDD" id="cd03368">
    <property type="entry name" value="Ribosomal_S12"/>
    <property type="match status" value="1"/>
</dbReference>
<dbReference type="FunFam" id="2.40.50.140:FF:000192">
    <property type="entry name" value="Mitochondrial ribosomal protein S12"/>
    <property type="match status" value="1"/>
</dbReference>
<dbReference type="Gene3D" id="2.40.50.140">
    <property type="entry name" value="Nucleic acid-binding proteins"/>
    <property type="match status" value="1"/>
</dbReference>
<dbReference type="HAMAP" id="MF_00403_B">
    <property type="entry name" value="Ribosomal_uS12_B"/>
    <property type="match status" value="1"/>
</dbReference>
<dbReference type="InterPro" id="IPR012340">
    <property type="entry name" value="NA-bd_OB-fold"/>
</dbReference>
<dbReference type="InterPro" id="IPR006032">
    <property type="entry name" value="Ribosomal_uS12"/>
</dbReference>
<dbReference type="InterPro" id="IPR005679">
    <property type="entry name" value="Ribosomal_uS12_bac"/>
</dbReference>
<dbReference type="NCBIfam" id="TIGR00981">
    <property type="entry name" value="rpsL_bact"/>
    <property type="match status" value="1"/>
</dbReference>
<dbReference type="PANTHER" id="PTHR11652">
    <property type="entry name" value="30S RIBOSOMAL PROTEIN S12 FAMILY MEMBER"/>
    <property type="match status" value="1"/>
</dbReference>
<dbReference type="Pfam" id="PF00164">
    <property type="entry name" value="Ribosom_S12_S23"/>
    <property type="match status" value="1"/>
</dbReference>
<dbReference type="PIRSF" id="PIRSF002133">
    <property type="entry name" value="Ribosomal_S12/S23"/>
    <property type="match status" value="1"/>
</dbReference>
<dbReference type="PRINTS" id="PR01034">
    <property type="entry name" value="RIBOSOMALS12"/>
</dbReference>
<dbReference type="SUPFAM" id="SSF50249">
    <property type="entry name" value="Nucleic acid-binding proteins"/>
    <property type="match status" value="1"/>
</dbReference>
<dbReference type="PROSITE" id="PS00055">
    <property type="entry name" value="RIBOSOMAL_S12"/>
    <property type="match status" value="1"/>
</dbReference>
<accession>Q4UKC5</accession>
<reference key="1">
    <citation type="journal article" date="2005" name="PLoS Biol.">
        <title>The genome sequence of Rickettsia felis identifies the first putative conjugative plasmid in an obligate intracellular parasite.</title>
        <authorList>
            <person name="Ogata H."/>
            <person name="Renesto P."/>
            <person name="Audic S."/>
            <person name="Robert C."/>
            <person name="Blanc G."/>
            <person name="Fournier P.-E."/>
            <person name="Parinello H."/>
            <person name="Claverie J.-M."/>
            <person name="Raoult D."/>
        </authorList>
    </citation>
    <scope>NUCLEOTIDE SEQUENCE [LARGE SCALE GENOMIC DNA]</scope>
    <source>
        <strain>ATCC VR-1525 / URRWXCal2</strain>
    </source>
</reference>
<name>RS12_RICFE</name>
<organism>
    <name type="scientific">Rickettsia felis (strain ATCC VR-1525 / URRWXCal2)</name>
    <name type="common">Rickettsia azadi</name>
    <dbReference type="NCBI Taxonomy" id="315456"/>
    <lineage>
        <taxon>Bacteria</taxon>
        <taxon>Pseudomonadati</taxon>
        <taxon>Pseudomonadota</taxon>
        <taxon>Alphaproteobacteria</taxon>
        <taxon>Rickettsiales</taxon>
        <taxon>Rickettsiaceae</taxon>
        <taxon>Rickettsieae</taxon>
        <taxon>Rickettsia</taxon>
        <taxon>spotted fever group</taxon>
    </lineage>
</organism>
<evidence type="ECO:0000250" key="1"/>
<evidence type="ECO:0000255" key="2">
    <source>
        <dbReference type="HAMAP-Rule" id="MF_00403"/>
    </source>
</evidence>
<evidence type="ECO:0000256" key="3">
    <source>
        <dbReference type="SAM" id="MobiDB-lite"/>
    </source>
</evidence>
<evidence type="ECO:0000305" key="4"/>
<proteinExistence type="inferred from homology"/>
<gene>
    <name evidence="2" type="primary">rpsL</name>
    <name type="ordered locus">RF_1155</name>
</gene>
<sequence length="129" mass="14291">MPTYNQLVRFGRKSKTRKTKSPALESNPFKSGVCLVVKTVTPKKPNSALRKIATVRLSNKRTVNAYIPGEKHSVKEHDRVLVRGGQVPDLPGVKYHIVLGAYDIAGVKGRKQGRSRYGAPRKQVAVTKK</sequence>
<feature type="chain" id="PRO_0000226411" description="Small ribosomal subunit protein uS12">
    <location>
        <begin position="1"/>
        <end position="129"/>
    </location>
</feature>
<feature type="region of interest" description="Disordered" evidence="3">
    <location>
        <begin position="1"/>
        <end position="25"/>
    </location>
</feature>
<feature type="region of interest" description="Disordered" evidence="3">
    <location>
        <begin position="110"/>
        <end position="129"/>
    </location>
</feature>
<feature type="compositionally biased region" description="Basic residues" evidence="3">
    <location>
        <begin position="10"/>
        <end position="20"/>
    </location>
</feature>
<feature type="modified residue" description="3-methylthioaspartic acid" evidence="1">
    <location>
        <position position="89"/>
    </location>
</feature>
<comment type="function">
    <text evidence="2">With S4 and S5 plays an important role in translational accuracy.</text>
</comment>
<comment type="function">
    <text evidence="2">Interacts with and stabilizes bases of the 16S rRNA that are involved in tRNA selection in the A site and with the mRNA backbone. Located at the interface of the 30S and 50S subunits, it traverses the body of the 30S subunit contacting proteins on the other side and probably holding the rRNA structure together. The combined cluster of proteins S8, S12 and S17 appears to hold together the shoulder and platform of the 30S subunit.</text>
</comment>
<comment type="subunit">
    <text evidence="2">Part of the 30S ribosomal subunit. Contacts proteins S8 and S17. May interact with IF1 in the 30S initiation complex.</text>
</comment>
<comment type="similarity">
    <text evidence="2">Belongs to the universal ribosomal protein uS12 family.</text>
</comment>
<comment type="sequence caution" evidence="4">
    <conflict type="erroneous initiation">
        <sequence resource="EMBL-CDS" id="AAY62006"/>
    </conflict>
</comment>